<gene>
    <name evidence="8" type="primary">Htr3a</name>
    <name type="synonym">5ht3</name>
    <name type="synonym">Htr3</name>
</gene>
<dbReference type="EMBL" id="D49395">
    <property type="protein sequence ID" value="BAA08388.1"/>
    <property type="molecule type" value="mRNA"/>
</dbReference>
<dbReference type="EMBL" id="U01227">
    <property type="protein sequence ID" value="AAA52182.1"/>
    <property type="molecule type" value="mRNA"/>
</dbReference>
<dbReference type="PIR" id="I58179">
    <property type="entry name" value="I58179"/>
</dbReference>
<dbReference type="RefSeq" id="NP_077370.2">
    <property type="nucleotide sequence ID" value="NM_024394.3"/>
</dbReference>
<dbReference type="SMR" id="P35563"/>
<dbReference type="ComplexPortal" id="CPX-277">
    <property type="entry name" value="5-hydroxytryptamine-3A/B receptor complex"/>
</dbReference>
<dbReference type="ComplexPortal" id="CPX-278">
    <property type="entry name" value="5-hydroxytryptamine-3A receptor complex"/>
</dbReference>
<dbReference type="FunCoup" id="P35563">
    <property type="interactions" value="103"/>
</dbReference>
<dbReference type="STRING" id="10116.ENSRNOP00000008965"/>
<dbReference type="BindingDB" id="P35563"/>
<dbReference type="ChEMBL" id="CHEMBL2411"/>
<dbReference type="DrugCentral" id="P35563"/>
<dbReference type="GuidetoPHARMACOLOGY" id="373"/>
<dbReference type="TCDB" id="1.A.9.2.2">
    <property type="family name" value="the neurotransmitter receptor, cys loop, ligand-gated ion channel (lic) family"/>
</dbReference>
<dbReference type="GlyCosmos" id="P35563">
    <property type="glycosylation" value="3 sites, No reported glycans"/>
</dbReference>
<dbReference type="GlyGen" id="P35563">
    <property type="glycosylation" value="3 sites"/>
</dbReference>
<dbReference type="PhosphoSitePlus" id="P35563"/>
<dbReference type="PaxDb" id="10116-ENSRNOP00000008965"/>
<dbReference type="GeneID" id="79246"/>
<dbReference type="KEGG" id="rno:79246"/>
<dbReference type="UCSC" id="RGD:61818">
    <property type="organism name" value="rat"/>
</dbReference>
<dbReference type="AGR" id="RGD:61818"/>
<dbReference type="CTD" id="3359"/>
<dbReference type="RGD" id="61818">
    <property type="gene designation" value="Htr3a"/>
</dbReference>
<dbReference type="VEuPathDB" id="HostDB:ENSRNOG00000006595"/>
<dbReference type="eggNOG" id="KOG3645">
    <property type="taxonomic scope" value="Eukaryota"/>
</dbReference>
<dbReference type="HOGENOM" id="CLU_018074_5_0_1"/>
<dbReference type="InParanoid" id="P35563"/>
<dbReference type="PhylomeDB" id="P35563"/>
<dbReference type="TreeFam" id="TF315605"/>
<dbReference type="Reactome" id="R-RNO-112314">
    <property type="pathway name" value="Neurotransmitter receptors and postsynaptic signal transmission"/>
</dbReference>
<dbReference type="PRO" id="PR:P35563"/>
<dbReference type="Proteomes" id="UP000002494">
    <property type="component" value="Chromosome 8"/>
</dbReference>
<dbReference type="Bgee" id="ENSRNOG00000006595">
    <property type="expression patterns" value="Expressed in Ammon's horn and 8 other cell types or tissues"/>
</dbReference>
<dbReference type="GO" id="GO:0030424">
    <property type="term" value="C:axon"/>
    <property type="evidence" value="ECO:0000314"/>
    <property type="project" value="RGD"/>
</dbReference>
<dbReference type="GO" id="GO:0032154">
    <property type="term" value="C:cleavage furrow"/>
    <property type="evidence" value="ECO:0000266"/>
    <property type="project" value="RGD"/>
</dbReference>
<dbReference type="GO" id="GO:0098978">
    <property type="term" value="C:glutamatergic synapse"/>
    <property type="evidence" value="ECO:0000314"/>
    <property type="project" value="SynGO"/>
</dbReference>
<dbReference type="GO" id="GO:0043005">
    <property type="term" value="C:neuron projection"/>
    <property type="evidence" value="ECO:0000318"/>
    <property type="project" value="GO_Central"/>
</dbReference>
<dbReference type="GO" id="GO:0043025">
    <property type="term" value="C:neuronal cell body"/>
    <property type="evidence" value="ECO:0000314"/>
    <property type="project" value="RGD"/>
</dbReference>
<dbReference type="GO" id="GO:0005886">
    <property type="term" value="C:plasma membrane"/>
    <property type="evidence" value="ECO:0000266"/>
    <property type="project" value="RGD"/>
</dbReference>
<dbReference type="GO" id="GO:0045211">
    <property type="term" value="C:postsynaptic membrane"/>
    <property type="evidence" value="ECO:0000314"/>
    <property type="project" value="SynGO"/>
</dbReference>
<dbReference type="GO" id="GO:0042734">
    <property type="term" value="C:presynaptic membrane"/>
    <property type="evidence" value="ECO:0000314"/>
    <property type="project" value="SynGO"/>
</dbReference>
<dbReference type="GO" id="GO:1904602">
    <property type="term" value="C:serotonin-activated cation-selective channel complex"/>
    <property type="evidence" value="ECO:0000266"/>
    <property type="project" value="RGD"/>
</dbReference>
<dbReference type="GO" id="GO:0045202">
    <property type="term" value="C:synapse"/>
    <property type="evidence" value="ECO:0000318"/>
    <property type="project" value="GO_Central"/>
</dbReference>
<dbReference type="GO" id="GO:1902495">
    <property type="term" value="C:transmembrane transporter complex"/>
    <property type="evidence" value="ECO:0000318"/>
    <property type="project" value="GO_Central"/>
</dbReference>
<dbReference type="GO" id="GO:0005231">
    <property type="term" value="F:excitatory extracellular ligand-gated monoatomic ion channel activity"/>
    <property type="evidence" value="ECO:0000318"/>
    <property type="project" value="GO_Central"/>
</dbReference>
<dbReference type="GO" id="GO:0042802">
    <property type="term" value="F:identical protein binding"/>
    <property type="evidence" value="ECO:0000266"/>
    <property type="project" value="RGD"/>
</dbReference>
<dbReference type="GO" id="GO:0099507">
    <property type="term" value="F:ligand-gated monoatomic ion channel activity involved in regulation of presynaptic membrane potential"/>
    <property type="evidence" value="ECO:0000266"/>
    <property type="project" value="RGD"/>
</dbReference>
<dbReference type="GO" id="GO:0051378">
    <property type="term" value="F:serotonin binding"/>
    <property type="evidence" value="ECO:0000266"/>
    <property type="project" value="RGD"/>
</dbReference>
<dbReference type="GO" id="GO:0022850">
    <property type="term" value="F:serotonin-gated monoatomic cation channel activity"/>
    <property type="evidence" value="ECO:0000314"/>
    <property type="project" value="RGD"/>
</dbReference>
<dbReference type="GO" id="GO:1904315">
    <property type="term" value="F:transmitter-gated monoatomic ion channel activity involved in regulation of postsynaptic membrane potential"/>
    <property type="evidence" value="ECO:0000318"/>
    <property type="project" value="GO_Central"/>
</dbReference>
<dbReference type="GO" id="GO:0048149">
    <property type="term" value="P:behavioral response to ethanol"/>
    <property type="evidence" value="ECO:0000270"/>
    <property type="project" value="RGD"/>
</dbReference>
<dbReference type="GO" id="GO:0071363">
    <property type="term" value="P:cellular response to growth factor stimulus"/>
    <property type="evidence" value="ECO:0000270"/>
    <property type="project" value="RGD"/>
</dbReference>
<dbReference type="GO" id="GO:0007268">
    <property type="term" value="P:chemical synaptic transmission"/>
    <property type="evidence" value="ECO:0000318"/>
    <property type="project" value="GO_Central"/>
</dbReference>
<dbReference type="GO" id="GO:0098662">
    <property type="term" value="P:inorganic cation transmembrane transport"/>
    <property type="evidence" value="ECO:0000266"/>
    <property type="project" value="RGD"/>
</dbReference>
<dbReference type="GO" id="GO:0034220">
    <property type="term" value="P:monoatomic ion transmembrane transport"/>
    <property type="evidence" value="ECO:0000318"/>
    <property type="project" value="GO_Central"/>
</dbReference>
<dbReference type="GO" id="GO:0042391">
    <property type="term" value="P:regulation of membrane potential"/>
    <property type="evidence" value="ECO:0000318"/>
    <property type="project" value="GO_Central"/>
</dbReference>
<dbReference type="GO" id="GO:0042220">
    <property type="term" value="P:response to cocaine"/>
    <property type="evidence" value="ECO:0000270"/>
    <property type="project" value="RGD"/>
</dbReference>
<dbReference type="GO" id="GO:0045471">
    <property type="term" value="P:response to ethanol"/>
    <property type="evidence" value="ECO:0000270"/>
    <property type="project" value="RGD"/>
</dbReference>
<dbReference type="GO" id="GO:0007210">
    <property type="term" value="P:serotonin receptor signaling pathway"/>
    <property type="evidence" value="ECO:0000266"/>
    <property type="project" value="RGD"/>
</dbReference>
<dbReference type="GO" id="GO:0140227">
    <property type="term" value="P:serotonin-gated cation-selective signaling pathway"/>
    <property type="evidence" value="ECO:0000266"/>
    <property type="project" value="RGD"/>
</dbReference>
<dbReference type="CDD" id="cd19011">
    <property type="entry name" value="LGIC_ECD_5-HT3A"/>
    <property type="match status" value="1"/>
</dbReference>
<dbReference type="CDD" id="cd19063">
    <property type="entry name" value="LGIC_TM_5-HT3"/>
    <property type="match status" value="1"/>
</dbReference>
<dbReference type="FunFam" id="1.20.58.390:FF:000020">
    <property type="entry name" value="5-hydroxytryptamine (serotonin) receptor 3A"/>
    <property type="match status" value="1"/>
</dbReference>
<dbReference type="FunFam" id="2.70.170.10:FF:000017">
    <property type="entry name" value="5-hydroxytryptamine receptor 3A"/>
    <property type="match status" value="1"/>
</dbReference>
<dbReference type="Gene3D" id="2.70.170.10">
    <property type="entry name" value="Neurotransmitter-gated ion-channel ligand-binding domain"/>
    <property type="match status" value="1"/>
</dbReference>
<dbReference type="Gene3D" id="1.20.58.390">
    <property type="entry name" value="Neurotransmitter-gated ion-channel transmembrane domain"/>
    <property type="match status" value="1"/>
</dbReference>
<dbReference type="InterPro" id="IPR008132">
    <property type="entry name" value="5HT3_rcpt"/>
</dbReference>
<dbReference type="InterPro" id="IPR008133">
    <property type="entry name" value="5HT3_rcpt_A"/>
</dbReference>
<dbReference type="InterPro" id="IPR049944">
    <property type="entry name" value="LGIC_TM_5-HT3"/>
</dbReference>
<dbReference type="InterPro" id="IPR006202">
    <property type="entry name" value="Neur_chan_lig-bd"/>
</dbReference>
<dbReference type="InterPro" id="IPR036734">
    <property type="entry name" value="Neur_chan_lig-bd_sf"/>
</dbReference>
<dbReference type="InterPro" id="IPR006201">
    <property type="entry name" value="Neur_channel"/>
</dbReference>
<dbReference type="InterPro" id="IPR036719">
    <property type="entry name" value="Neuro-gated_channel_TM_sf"/>
</dbReference>
<dbReference type="InterPro" id="IPR038050">
    <property type="entry name" value="Neuro_actylchol_rec"/>
</dbReference>
<dbReference type="InterPro" id="IPR006029">
    <property type="entry name" value="Neurotrans-gated_channel_TM"/>
</dbReference>
<dbReference type="InterPro" id="IPR018000">
    <property type="entry name" value="Neurotransmitter_ion_chnl_CS"/>
</dbReference>
<dbReference type="NCBIfam" id="TIGR00860">
    <property type="entry name" value="LIC"/>
    <property type="match status" value="1"/>
</dbReference>
<dbReference type="PANTHER" id="PTHR18945">
    <property type="entry name" value="NEUROTRANSMITTER GATED ION CHANNEL"/>
    <property type="match status" value="1"/>
</dbReference>
<dbReference type="Pfam" id="PF02931">
    <property type="entry name" value="Neur_chan_LBD"/>
    <property type="match status" value="1"/>
</dbReference>
<dbReference type="Pfam" id="PF02932">
    <property type="entry name" value="Neur_chan_memb"/>
    <property type="match status" value="1"/>
</dbReference>
<dbReference type="PRINTS" id="PR01709">
    <property type="entry name" value="5HT3ARECEPTR"/>
</dbReference>
<dbReference type="PRINTS" id="PR01708">
    <property type="entry name" value="5HT3RECEPTOR"/>
</dbReference>
<dbReference type="PRINTS" id="PR00252">
    <property type="entry name" value="NRIONCHANNEL"/>
</dbReference>
<dbReference type="SUPFAM" id="SSF90112">
    <property type="entry name" value="Neurotransmitter-gated ion-channel transmembrane pore"/>
    <property type="match status" value="1"/>
</dbReference>
<dbReference type="SUPFAM" id="SSF63712">
    <property type="entry name" value="Nicotinic receptor ligand binding domain-like"/>
    <property type="match status" value="1"/>
</dbReference>
<dbReference type="PROSITE" id="PS00236">
    <property type="entry name" value="NEUROTR_ION_CHANNEL"/>
    <property type="match status" value="1"/>
</dbReference>
<accession>P35563</accession>
<organism>
    <name type="scientific">Rattus norvegicus</name>
    <name type="common">Rat</name>
    <dbReference type="NCBI Taxonomy" id="10116"/>
    <lineage>
        <taxon>Eukaryota</taxon>
        <taxon>Metazoa</taxon>
        <taxon>Chordata</taxon>
        <taxon>Craniata</taxon>
        <taxon>Vertebrata</taxon>
        <taxon>Euteleostomi</taxon>
        <taxon>Mammalia</taxon>
        <taxon>Eutheria</taxon>
        <taxon>Euarchontoglires</taxon>
        <taxon>Glires</taxon>
        <taxon>Rodentia</taxon>
        <taxon>Myomorpha</taxon>
        <taxon>Muroidea</taxon>
        <taxon>Muridae</taxon>
        <taxon>Murinae</taxon>
        <taxon>Rattus</taxon>
    </lineage>
</organism>
<feature type="signal peptide" evidence="3">
    <location>
        <begin position="1"/>
        <end position="23"/>
    </location>
</feature>
<feature type="chain" id="PRO_0000000410" description="5-hydroxytryptamine receptor 3A">
    <location>
        <begin position="24"/>
        <end position="483"/>
    </location>
</feature>
<feature type="topological domain" description="Extracellular" evidence="1">
    <location>
        <begin position="24"/>
        <end position="246"/>
    </location>
</feature>
<feature type="transmembrane region" description="Helical; Name=1" evidence="3">
    <location>
        <begin position="247"/>
        <end position="273"/>
    </location>
</feature>
<feature type="topological domain" description="Cytoplasmic" evidence="1">
    <location>
        <begin position="274"/>
        <end position="278"/>
    </location>
</feature>
<feature type="transmembrane region" description="Helical; Name=2" evidence="3">
    <location>
        <begin position="279"/>
        <end position="297"/>
    </location>
</feature>
<feature type="topological domain" description="Extracellular" evidence="1">
    <location>
        <begin position="298"/>
        <end position="307"/>
    </location>
</feature>
<feature type="transmembrane region" description="Helical; Name=3" evidence="3">
    <location>
        <begin position="308"/>
        <end position="326"/>
    </location>
</feature>
<feature type="topological domain" description="Cytoplasmic" evidence="1">
    <location>
        <begin position="327"/>
        <end position="460"/>
    </location>
</feature>
<feature type="transmembrane region" description="Helical; Name=4" evidence="3">
    <location>
        <begin position="461"/>
        <end position="480"/>
    </location>
</feature>
<feature type="topological domain" description="Extracellular" evidence="1">
    <location>
        <begin position="481"/>
        <end position="483"/>
    </location>
</feature>
<feature type="region of interest" description="Disordered" evidence="4">
    <location>
        <begin position="393"/>
        <end position="414"/>
    </location>
</feature>
<feature type="region of interest" description="HA-stretch; determines single-channel conductance in 5-HT3 receptors" evidence="2">
    <location>
        <begin position="419"/>
        <end position="455"/>
    </location>
</feature>
<feature type="compositionally biased region" description="Basic and acidic residues" evidence="4">
    <location>
        <begin position="398"/>
        <end position="407"/>
    </location>
</feature>
<feature type="glycosylation site" description="N-linked (GlcNAc...) asparagine" evidence="3">
    <location>
        <position position="109"/>
    </location>
</feature>
<feature type="glycosylation site" description="N-linked (GlcNAc...) asparagine" evidence="3">
    <location>
        <position position="175"/>
    </location>
</feature>
<feature type="glycosylation site" description="N-linked (GlcNAc...) asparagine" evidence="3">
    <location>
        <position position="191"/>
    </location>
</feature>
<feature type="disulfide bond" evidence="1">
    <location>
        <begin position="162"/>
        <end position="176"/>
    </location>
</feature>
<feature type="sequence conflict" description="In Ref. 2; AAA52182." evidence="7" ref="2">
    <original>E</original>
    <variation>K</variation>
    <location>
        <position position="22"/>
    </location>
</feature>
<feature type="sequence conflict" description="In Ref. 2; AAA52182." evidence="7" ref="2">
    <original>G</original>
    <variation>R</variation>
    <location>
        <position position="306"/>
    </location>
</feature>
<protein>
    <recommendedName>
        <fullName evidence="7">5-hydroxytryptamine receptor 3A</fullName>
        <shortName>5-HT3-A</shortName>
        <shortName>5-HT3A</shortName>
    </recommendedName>
    <alternativeName>
        <fullName>5-hydroxytryptamine receptor 3</fullName>
        <shortName>5-HT-3</shortName>
        <shortName>5-HT3R</shortName>
    </alternativeName>
    <alternativeName>
        <fullName>Serotonin receptor 3A</fullName>
    </alternativeName>
    <alternativeName>
        <fullName>Serotonin-gated ion channel receptor</fullName>
    </alternativeName>
</protein>
<keyword id="KW-1003">Cell membrane</keyword>
<keyword id="KW-1015">Disulfide bond</keyword>
<keyword id="KW-0325">Glycoprotein</keyword>
<keyword id="KW-0407">Ion channel</keyword>
<keyword id="KW-0406">Ion transport</keyword>
<keyword id="KW-1071">Ligand-gated ion channel</keyword>
<keyword id="KW-0472">Membrane</keyword>
<keyword id="KW-0628">Postsynaptic cell membrane</keyword>
<keyword id="KW-0675">Receptor</keyword>
<keyword id="KW-1185">Reference proteome</keyword>
<keyword id="KW-0732">Signal</keyword>
<keyword id="KW-0770">Synapse</keyword>
<keyword id="KW-0812">Transmembrane</keyword>
<keyword id="KW-1133">Transmembrane helix</keyword>
<keyword id="KW-0813">Transport</keyword>
<proteinExistence type="evidence at protein level"/>
<name>5HT3A_RAT</name>
<reference key="1">
    <citation type="submission" date="1995-02" db="EMBL/GenBank/DDBJ databases">
        <authorList>
            <person name="Miyake A."/>
            <person name="Mochizuki S."/>
            <person name="Akuzawa S."/>
            <person name="Kon G."/>
        </authorList>
    </citation>
    <scope>NUCLEOTIDE SEQUENCE [MRNA]</scope>
    <source>
        <tissue>Brain</tissue>
    </source>
</reference>
<reference key="2">
    <citation type="journal article" date="1993" name="NeuroReport">
        <title>Partial cDNA cloning and NGF regulation of a rat 5-HT3 receptor subunit.</title>
        <authorList>
            <person name="Isenberg K.E."/>
            <person name="Ukhun I.A."/>
            <person name="Holstad S.G."/>
            <person name="Jafri S."/>
            <person name="Uchida U."/>
            <person name="Zorumski C.F."/>
            <person name="Yang J."/>
        </authorList>
    </citation>
    <scope>NUCLEOTIDE SEQUENCE [MRNA] OF 22-483</scope>
</reference>
<reference key="3">
    <citation type="journal article" date="2000" name="J. Neurochem.">
        <title>Evidence for expression of heteromeric serotonin 5-HT(3) receptors in rodents.</title>
        <authorList>
            <person name="Hanna M.C."/>
            <person name="Davies P.A."/>
            <person name="Hales T.G."/>
            <person name="Kirkness E.F."/>
        </authorList>
    </citation>
    <scope>SUBUNIT</scope>
    <scope>INDUCTION</scope>
</reference>
<reference key="4">
    <citation type="journal article" date="2002" name="J. Neurosci.">
        <title>Differential composition of 5-hydroxytryptamine3 receptors synthesized in the rat CNS and peripheral nervous system.</title>
        <authorList>
            <person name="Morales M."/>
            <person name="Wang S.-D."/>
        </authorList>
    </citation>
    <scope>SUBUNIT</scope>
    <scope>TISSUE SPECIFICITY</scope>
</reference>
<sequence length="483" mass="55428">MPLCIPQVLLALFLSVLIAQGEGSRRRATQAHSTTQPALLRLSDHLLANYKKGVRPVRDWRKPTLVSIDVIMYAILNVDEKNQVLTTYIWYRQFWTDEFLQWTPEDFDNVTKLSIPTDSIWVPDILINEFVDVGKSPSIPYVYVHHQGEVQNYKPLQLVTACSLDIYNFPFDVQNCSLTFTSWLHTIQDINISLWRTPEEVRSDKSIFINQGEWELLGVFTKFQEFSIETSNSYAEMKFYVVIRRRPLFYAVSLLLPSIFLMVVDIVGFCLPPDSGERVSFKITLLLGYSVFLIIVSDTLPATAIGTPLIGVYFVVCMALLVISLAETIFIVQLVHKQDLQRPVPDWLRHLVLDRIAWLLCLGEQPMAHRPPATFQANKTDDCSAMGNHCSHVGSPQDLEKTSRSRDSPLPPPREASLAVRGLLQELSSIRHSLEKRDEMREVARDWLRVGYVLDRLLFRIYLLAVLAYSITLVTLWSIWHYS</sequence>
<evidence type="ECO:0000250" key="1">
    <source>
        <dbReference type="UniProtKB" id="P23979"/>
    </source>
</evidence>
<evidence type="ECO:0000250" key="2">
    <source>
        <dbReference type="UniProtKB" id="P46098"/>
    </source>
</evidence>
<evidence type="ECO:0000255" key="3"/>
<evidence type="ECO:0000256" key="4">
    <source>
        <dbReference type="SAM" id="MobiDB-lite"/>
    </source>
</evidence>
<evidence type="ECO:0000269" key="5">
    <source>
    </source>
</evidence>
<evidence type="ECO:0000269" key="6">
    <source>
    </source>
</evidence>
<evidence type="ECO:0000305" key="7"/>
<evidence type="ECO:0000312" key="8">
    <source>
        <dbReference type="RGD" id="61818"/>
    </source>
</evidence>
<comment type="function">
    <text evidence="2">Forms serotonin (5-hydroxytryptamine/5-HT3)-activated cation-selective channel complexes, which when activated cause fast, depolarizing responses in neurons.</text>
</comment>
<comment type="catalytic activity">
    <reaction evidence="2">
        <text>Na(+)(in) = Na(+)(out)</text>
        <dbReference type="Rhea" id="RHEA:34963"/>
        <dbReference type="ChEBI" id="CHEBI:29101"/>
    </reaction>
</comment>
<comment type="catalytic activity">
    <reaction evidence="2">
        <text>K(+)(in) = K(+)(out)</text>
        <dbReference type="Rhea" id="RHEA:29463"/>
        <dbReference type="ChEBI" id="CHEBI:29103"/>
    </reaction>
</comment>
<comment type="catalytic activity">
    <reaction evidence="2">
        <text>Ca(2+)(in) = Ca(2+)(out)</text>
        <dbReference type="Rhea" id="RHEA:29671"/>
        <dbReference type="ChEBI" id="CHEBI:29108"/>
    </reaction>
</comment>
<comment type="catalytic activity">
    <reaction evidence="2">
        <text>Mg(2+)(in) = Mg(2+)(out)</text>
        <dbReference type="Rhea" id="RHEA:29827"/>
        <dbReference type="ChEBI" id="CHEBI:18420"/>
    </reaction>
</comment>
<comment type="subunit">
    <text evidence="2 5 6">Forms homopentameric as well as heteropentameric serotonin-activated cation-selective channel complexes with HTR3B or HTR3C or HTR3D or HTR3E. The homomeric complex is functional but exhibits low conductance with modified voltage dependence, and decreased agonist and antagonist affinity. Heteropentameric complexes display properties which resemble that of neuronal serotonin-activated channels in vivo (PubMed:10854267, PubMed:12151552). Interacts with RIC3 (By similarity).</text>
</comment>
<comment type="subcellular location">
    <subcellularLocation>
        <location evidence="2">Postsynaptic cell membrane</location>
        <topology evidence="1">Multi-pass membrane protein</topology>
    </subcellularLocation>
    <subcellularLocation>
        <location evidence="2">Cell membrane</location>
        <topology evidence="1">Multi-pass membrane protein</topology>
    </subcellularLocation>
</comment>
<comment type="tissue specificity">
    <text evidence="6">Expressed in central and peripheral neurons.</text>
</comment>
<comment type="induction">
    <text evidence="5">By nerve growth factor in PC12 cells.</text>
</comment>
<comment type="domain">
    <text evidence="2">The HA-stretch region of HTR3A seems to be responsible for the low conductance of HTR3A homomers compared to that of HTR3A/HTR3B heteromers.</text>
</comment>
<comment type="similarity">
    <text evidence="7">Belongs to the ligand-gated ion channel (TC 1.A.9) family. 5-hydroxytryptamine receptor (TC 1.A.9.2) subfamily. HTR3A sub-subfamily.</text>
</comment>